<accession>P38102</accession>
<accession>Q9HV45</accession>
<dbReference type="EMBL" id="U04992">
    <property type="protein sequence ID" value="AAA19047.1"/>
    <property type="molecule type" value="Unassigned_DNA"/>
</dbReference>
<dbReference type="EMBL" id="U81259">
    <property type="protein sequence ID" value="AAB39251.1"/>
    <property type="molecule type" value="Genomic_DNA"/>
</dbReference>
<dbReference type="EMBL" id="AE004091">
    <property type="protein sequence ID" value="AAG08143.1"/>
    <property type="molecule type" value="Genomic_DNA"/>
</dbReference>
<dbReference type="PIR" id="C55580">
    <property type="entry name" value="C55580"/>
</dbReference>
<dbReference type="PIR" id="F83051">
    <property type="entry name" value="F83051"/>
</dbReference>
<dbReference type="RefSeq" id="NP_253445.1">
    <property type="nucleotide sequence ID" value="NC_002516.2"/>
</dbReference>
<dbReference type="FunCoup" id="P38102">
    <property type="interactions" value="86"/>
</dbReference>
<dbReference type="STRING" id="208964.PA4757"/>
<dbReference type="PaxDb" id="208964-PA4757"/>
<dbReference type="DNASU" id="881750"/>
<dbReference type="GeneID" id="881750"/>
<dbReference type="KEGG" id="pae:PA4757"/>
<dbReference type="PATRIC" id="fig|208964.12.peg.4983"/>
<dbReference type="PseudoCAP" id="PA4757"/>
<dbReference type="HOGENOM" id="CLU_079569_3_1_6"/>
<dbReference type="InParanoid" id="P38102"/>
<dbReference type="OrthoDB" id="9784202at2"/>
<dbReference type="PhylomeDB" id="P38102"/>
<dbReference type="BioCyc" id="PAER208964:G1FZ6-4869-MONOMER"/>
<dbReference type="Proteomes" id="UP000002438">
    <property type="component" value="Chromosome"/>
</dbReference>
<dbReference type="GO" id="GO:0005886">
    <property type="term" value="C:plasma membrane"/>
    <property type="evidence" value="ECO:0000318"/>
    <property type="project" value="GO_Central"/>
</dbReference>
<dbReference type="GO" id="GO:0015190">
    <property type="term" value="F:L-leucine transmembrane transporter activity"/>
    <property type="evidence" value="ECO:0000318"/>
    <property type="project" value="GO_Central"/>
</dbReference>
<dbReference type="GO" id="GO:0015820">
    <property type="term" value="P:L-leucine transport"/>
    <property type="evidence" value="ECO:0000318"/>
    <property type="project" value="GO_Central"/>
</dbReference>
<dbReference type="InterPro" id="IPR004778">
    <property type="entry name" value="Homoserine/Threonine_efflux"/>
</dbReference>
<dbReference type="InterPro" id="IPR001123">
    <property type="entry name" value="LeuE-type"/>
</dbReference>
<dbReference type="NCBIfam" id="TIGR00949">
    <property type="entry name" value="2A76"/>
    <property type="match status" value="1"/>
</dbReference>
<dbReference type="NCBIfam" id="NF008201">
    <property type="entry name" value="PRK10958.1"/>
    <property type="match status" value="1"/>
</dbReference>
<dbReference type="PANTHER" id="PTHR30086">
    <property type="entry name" value="ARGININE EXPORTER PROTEIN ARGO"/>
    <property type="match status" value="1"/>
</dbReference>
<dbReference type="PANTHER" id="PTHR30086:SF15">
    <property type="entry name" value="LEUCINE EFFLUX PROTEIN"/>
    <property type="match status" value="1"/>
</dbReference>
<dbReference type="Pfam" id="PF01810">
    <property type="entry name" value="LysE"/>
    <property type="match status" value="1"/>
</dbReference>
<dbReference type="PIRSF" id="PIRSF006324">
    <property type="entry name" value="LeuE"/>
    <property type="match status" value="1"/>
</dbReference>
<keyword id="KW-1003">Cell membrane</keyword>
<keyword id="KW-0472">Membrane</keyword>
<keyword id="KW-1185">Reference proteome</keyword>
<keyword id="KW-0812">Transmembrane</keyword>
<keyword id="KW-1133">Transmembrane helix</keyword>
<gene>
    <name type="ordered locus">PA4757</name>
</gene>
<protein>
    <recommendedName>
        <fullName>Uncharacterized membrane protein PA4757</fullName>
    </recommendedName>
</protein>
<comment type="subcellular location">
    <subcellularLocation>
        <location evidence="2">Cell membrane</location>
        <topology evidence="2">Multi-pass membrane protein</topology>
    </subcellularLocation>
</comment>
<comment type="similarity">
    <text evidence="2">Belongs to the Rht family.</text>
</comment>
<sequence length="216" mass="23249">MPTLGITDFWTYVLGVVFVILLPGPNSLFVLATSAQRGVATGYRAACGVFLGDAVLMLLSALGVASLLKAEPMLFIGLKYLGAAYLFYLGVGMLRGAWRKLRNPEATAAQAEQVDVHQPFRKALLLSLSNPKAILFFISFFIQFVDPGYAYPGLSFLVLAVILELVSALYLSFLIFTGVRLAAWFRRRQRLAAGATSGVGALFVGFGVKLATATLS</sequence>
<reference key="1">
    <citation type="journal article" date="1994" name="J. Bacteriol.">
        <title>Structure and regulation of the carAB operon in Pseudomonas aeruginosa and Pseudomonas stutzeri: no untranslated region exists.</title>
        <authorList>
            <person name="Kwon D.-H."/>
            <person name="Lu C.-D."/>
            <person name="Walthall D.A."/>
            <person name="Brown T.M."/>
            <person name="Houghton J.E."/>
            <person name="Abdelal A.T."/>
        </authorList>
    </citation>
    <scope>NUCLEOTIDE SEQUENCE [GENOMIC DNA]</scope>
    <source>
        <strain>ATCC 15692 / DSM 22644 / CIP 104116 / JCM 14847 / LMG 12228 / 1C / PRS 101 / PAO1</strain>
    </source>
</reference>
<reference key="2">
    <citation type="journal article" date="2000" name="Nature">
        <title>Complete genome sequence of Pseudomonas aeruginosa PAO1, an opportunistic pathogen.</title>
        <authorList>
            <person name="Stover C.K."/>
            <person name="Pham X.-Q.T."/>
            <person name="Erwin A.L."/>
            <person name="Mizoguchi S.D."/>
            <person name="Warrener P."/>
            <person name="Hickey M.J."/>
            <person name="Brinkman F.S.L."/>
            <person name="Hufnagle W.O."/>
            <person name="Kowalik D.J."/>
            <person name="Lagrou M."/>
            <person name="Garber R.L."/>
            <person name="Goltry L."/>
            <person name="Tolentino E."/>
            <person name="Westbrock-Wadman S."/>
            <person name="Yuan Y."/>
            <person name="Brody L.L."/>
            <person name="Coulter S.N."/>
            <person name="Folger K.R."/>
            <person name="Kas A."/>
            <person name="Larbig K."/>
            <person name="Lim R.M."/>
            <person name="Smith K.A."/>
            <person name="Spencer D.H."/>
            <person name="Wong G.K.-S."/>
            <person name="Wu Z."/>
            <person name="Paulsen I.T."/>
            <person name="Reizer J."/>
            <person name="Saier M.H. Jr."/>
            <person name="Hancock R.E.W."/>
            <person name="Lory S."/>
            <person name="Olson M.V."/>
        </authorList>
    </citation>
    <scope>NUCLEOTIDE SEQUENCE [LARGE SCALE GENOMIC DNA]</scope>
    <source>
        <strain>ATCC 15692 / DSM 22644 / CIP 104116 / JCM 14847 / LMG 12228 / 1C / PRS 101 / PAO1</strain>
    </source>
</reference>
<proteinExistence type="inferred from homology"/>
<feature type="chain" id="PRO_0000094747" description="Uncharacterized membrane protein PA4757">
    <location>
        <begin position="1"/>
        <end position="216"/>
    </location>
</feature>
<feature type="transmembrane region" description="Helical" evidence="1">
    <location>
        <begin position="12"/>
        <end position="32"/>
    </location>
</feature>
<feature type="transmembrane region" description="Helical" evidence="1">
    <location>
        <begin position="48"/>
        <end position="68"/>
    </location>
</feature>
<feature type="transmembrane region" description="Helical" evidence="1">
    <location>
        <begin position="74"/>
        <end position="94"/>
    </location>
</feature>
<feature type="transmembrane region" description="Helical" evidence="1">
    <location>
        <begin position="134"/>
        <end position="154"/>
    </location>
</feature>
<feature type="transmembrane region" description="Helical" evidence="1">
    <location>
        <begin position="156"/>
        <end position="176"/>
    </location>
</feature>
<feature type="transmembrane region" description="Helical" evidence="1">
    <location>
        <begin position="191"/>
        <end position="211"/>
    </location>
</feature>
<feature type="sequence conflict" description="In Ref. 1; AAA19047/AAB39251." evidence="2" ref="1">
    <original>A</original>
    <variation>G</variation>
    <location>
        <position position="109"/>
    </location>
</feature>
<feature type="sequence conflict" description="In Ref. 1; AAA19047/AAB39251." evidence="2" ref="1">
    <original>P</original>
    <variation>R</variation>
    <location>
        <position position="119"/>
    </location>
</feature>
<feature type="sequence conflict" description="In Ref. 1; AAA19047/AAB39251." evidence="2" ref="1">
    <original>K</original>
    <variation>Q</variation>
    <location>
        <position position="122"/>
    </location>
</feature>
<evidence type="ECO:0000255" key="1"/>
<evidence type="ECO:0000305" key="2"/>
<organism>
    <name type="scientific">Pseudomonas aeruginosa (strain ATCC 15692 / DSM 22644 / CIP 104116 / JCM 14847 / LMG 12228 / 1C / PRS 101 / PAO1)</name>
    <dbReference type="NCBI Taxonomy" id="208964"/>
    <lineage>
        <taxon>Bacteria</taxon>
        <taxon>Pseudomonadati</taxon>
        <taxon>Pseudomonadota</taxon>
        <taxon>Gammaproteobacteria</taxon>
        <taxon>Pseudomonadales</taxon>
        <taxon>Pseudomonadaceae</taxon>
        <taxon>Pseudomonas</taxon>
    </lineage>
</organism>
<name>Y4757_PSEAE</name>